<feature type="chain" id="PRO_0000153613" description="Ig lambda chain C region">
    <location>
        <begin position="1" status="less than"/>
        <end position="105"/>
    </location>
</feature>
<feature type="domain" description="Ig-like">
    <location>
        <begin position="2"/>
        <end position="100"/>
    </location>
</feature>
<feature type="disulfide bond">
    <location>
        <begin position="27"/>
        <end position="86"/>
    </location>
</feature>
<feature type="disulfide bond" description="Interchain (with heavy chain)">
    <location>
        <position position="104"/>
    </location>
</feature>
<feature type="non-terminal residue">
    <location>
        <position position="1"/>
    </location>
</feature>
<organism>
    <name type="scientific">Sus scrofa</name>
    <name type="common">Pig</name>
    <dbReference type="NCBI Taxonomy" id="9823"/>
    <lineage>
        <taxon>Eukaryota</taxon>
        <taxon>Metazoa</taxon>
        <taxon>Chordata</taxon>
        <taxon>Craniata</taxon>
        <taxon>Vertebrata</taxon>
        <taxon>Euteleostomi</taxon>
        <taxon>Mammalia</taxon>
        <taxon>Eutheria</taxon>
        <taxon>Laurasiatheria</taxon>
        <taxon>Artiodactyla</taxon>
        <taxon>Suina</taxon>
        <taxon>Suidae</taxon>
        <taxon>Sus</taxon>
    </lineage>
</organism>
<sequence length="105" mass="11003">QPKAAPTVNLFPPSSEELGTNKATLVCLISDFYPGAVTVTWKAGGTTVTQGVETTKPSKQSNNKYAASSYLALSASDWKSSSGFTCQVTHEGTIVEKTVTPSECA</sequence>
<keyword id="KW-0903">Direct protein sequencing</keyword>
<keyword id="KW-1015">Disulfide bond</keyword>
<keyword id="KW-0393">Immunoglobulin domain</keyword>
<keyword id="KW-1185">Reference proteome</keyword>
<reference key="1">
    <citation type="journal article" date="1977" name="Biochemistry">
        <title>Amino acid sequence of normal (microheterogeneous) porcine immunoglobulin lambda chains.</title>
        <authorList>
            <person name="Novotny J."/>
            <person name="Franek F."/>
            <person name="Margolies M.N."/>
            <person name="Haber E."/>
        </authorList>
    </citation>
    <scope>PROTEIN SEQUENCE</scope>
</reference>
<name>LAC_PIG</name>
<proteinExistence type="evidence at protein level"/>
<comment type="miscellaneous">
    <text>This chain was obtained from a mixture of normal immunoglobulins.</text>
</comment>
<accession>P01846</accession>
<dbReference type="PIR" id="A02129">
    <property type="entry name" value="L1PG"/>
</dbReference>
<dbReference type="SMR" id="P01846"/>
<dbReference type="FunCoup" id="P01846">
    <property type="interactions" value="7"/>
</dbReference>
<dbReference type="STRING" id="9823.ENSSSCP00000058189"/>
<dbReference type="PeptideAtlas" id="P01846"/>
<dbReference type="Ensembl" id="ENSSSCT00070017836.1">
    <property type="protein sequence ID" value="ENSSSCP00070014795.1"/>
    <property type="gene ID" value="ENSSSCG00070009195.1"/>
</dbReference>
<dbReference type="HOGENOM" id="CLU_077975_6_3_1"/>
<dbReference type="InParanoid" id="P01846"/>
<dbReference type="OMA" id="MVWTPLL"/>
<dbReference type="Reactome" id="R-SSC-166663">
    <property type="pathway name" value="Initial triggering of complement"/>
</dbReference>
<dbReference type="Reactome" id="R-SSC-173623">
    <property type="pathway name" value="Classical antibody-mediated complement activation"/>
</dbReference>
<dbReference type="Reactome" id="R-SSC-198933">
    <property type="pathway name" value="Immunoregulatory interactions between a Lymphoid and a non-Lymphoid cell"/>
</dbReference>
<dbReference type="Reactome" id="R-SSC-202733">
    <property type="pathway name" value="Cell surface interactions at the vascular wall"/>
</dbReference>
<dbReference type="Reactome" id="R-SSC-2029481">
    <property type="pathway name" value="FCGR activation"/>
</dbReference>
<dbReference type="Reactome" id="R-SSC-2029482">
    <property type="pathway name" value="Regulation of actin dynamics for phagocytic cup formation"/>
</dbReference>
<dbReference type="Reactome" id="R-SSC-2029485">
    <property type="pathway name" value="Role of phospholipids in phagocytosis"/>
</dbReference>
<dbReference type="Reactome" id="R-SSC-2168880">
    <property type="pathway name" value="Scavenging of heme from plasma"/>
</dbReference>
<dbReference type="Reactome" id="R-SSC-2454202">
    <property type="pathway name" value="Fc epsilon receptor (FCERI) signaling"/>
</dbReference>
<dbReference type="Reactome" id="R-SSC-2730905">
    <property type="pathway name" value="Role of LAT2/NTAL/LAB on calcium mobilization"/>
</dbReference>
<dbReference type="Reactome" id="R-SSC-2871796">
    <property type="pathway name" value="FCERI mediated MAPK activation"/>
</dbReference>
<dbReference type="Reactome" id="R-SSC-2871809">
    <property type="pathway name" value="FCERI mediated Ca+2 mobilization"/>
</dbReference>
<dbReference type="Reactome" id="R-SSC-2871837">
    <property type="pathway name" value="FCERI mediated NF-kB activation"/>
</dbReference>
<dbReference type="Reactome" id="R-SSC-5690714">
    <property type="pathway name" value="CD22 mediated BCR regulation"/>
</dbReference>
<dbReference type="Reactome" id="R-SSC-977606">
    <property type="pathway name" value="Regulation of Complement cascade"/>
</dbReference>
<dbReference type="Reactome" id="R-SSC-983695">
    <property type="pathway name" value="Antigen activates B Cell Receptor (BCR) leading to generation of second messengers"/>
</dbReference>
<dbReference type="Proteomes" id="UP000008227">
    <property type="component" value="Unplaced"/>
</dbReference>
<dbReference type="Proteomes" id="UP000314985">
    <property type="component" value="Unassembled WGS sequence"/>
</dbReference>
<dbReference type="Proteomes" id="UP000694570">
    <property type="component" value="Unplaced"/>
</dbReference>
<dbReference type="Proteomes" id="UP000694571">
    <property type="component" value="Unplaced"/>
</dbReference>
<dbReference type="Proteomes" id="UP000694720">
    <property type="component" value="Unplaced"/>
</dbReference>
<dbReference type="Proteomes" id="UP000694722">
    <property type="component" value="Unplaced"/>
</dbReference>
<dbReference type="Proteomes" id="UP000694723">
    <property type="component" value="Unplaced"/>
</dbReference>
<dbReference type="Proteomes" id="UP000694724">
    <property type="component" value="Unplaced"/>
</dbReference>
<dbReference type="Proteomes" id="UP000694725">
    <property type="component" value="Unplaced"/>
</dbReference>
<dbReference type="Proteomes" id="UP000694726">
    <property type="component" value="Unplaced"/>
</dbReference>
<dbReference type="Proteomes" id="UP000694727">
    <property type="component" value="Unplaced"/>
</dbReference>
<dbReference type="Proteomes" id="UP000694728">
    <property type="component" value="Unplaced"/>
</dbReference>
<dbReference type="GO" id="GO:0071735">
    <property type="term" value="C:IgG immunoglobulin complex"/>
    <property type="evidence" value="ECO:0000318"/>
    <property type="project" value="GO_Central"/>
</dbReference>
<dbReference type="GO" id="GO:0003823">
    <property type="term" value="F:antigen binding"/>
    <property type="evidence" value="ECO:0000318"/>
    <property type="project" value="GO_Central"/>
</dbReference>
<dbReference type="GO" id="GO:0016064">
    <property type="term" value="P:immunoglobulin mediated immune response"/>
    <property type="evidence" value="ECO:0000318"/>
    <property type="project" value="GO_Central"/>
</dbReference>
<dbReference type="CDD" id="cd07699">
    <property type="entry name" value="IgC1_L"/>
    <property type="match status" value="1"/>
</dbReference>
<dbReference type="FunFam" id="2.60.40.10:FF:000283">
    <property type="entry name" value="Immunoglobulin kappa constant"/>
    <property type="match status" value="1"/>
</dbReference>
<dbReference type="Gene3D" id="2.60.40.10">
    <property type="entry name" value="Immunoglobulins"/>
    <property type="match status" value="1"/>
</dbReference>
<dbReference type="InterPro" id="IPR007110">
    <property type="entry name" value="Ig-like_dom"/>
</dbReference>
<dbReference type="InterPro" id="IPR036179">
    <property type="entry name" value="Ig-like_dom_sf"/>
</dbReference>
<dbReference type="InterPro" id="IPR013783">
    <property type="entry name" value="Ig-like_fold"/>
</dbReference>
<dbReference type="InterPro" id="IPR003006">
    <property type="entry name" value="Ig/MHC_CS"/>
</dbReference>
<dbReference type="InterPro" id="IPR003597">
    <property type="entry name" value="Ig_C1-set"/>
</dbReference>
<dbReference type="InterPro" id="IPR050160">
    <property type="entry name" value="MHC/Immunoglobulin"/>
</dbReference>
<dbReference type="PANTHER" id="PTHR19944:SF98">
    <property type="entry name" value="IG-LIKE DOMAIN-CONTAINING PROTEIN"/>
    <property type="match status" value="1"/>
</dbReference>
<dbReference type="PANTHER" id="PTHR19944">
    <property type="entry name" value="MHC CLASS II-RELATED"/>
    <property type="match status" value="1"/>
</dbReference>
<dbReference type="Pfam" id="PF07654">
    <property type="entry name" value="C1-set"/>
    <property type="match status" value="1"/>
</dbReference>
<dbReference type="SMART" id="SM00407">
    <property type="entry name" value="IGc1"/>
    <property type="match status" value="1"/>
</dbReference>
<dbReference type="SUPFAM" id="SSF48726">
    <property type="entry name" value="Immunoglobulin"/>
    <property type="match status" value="1"/>
</dbReference>
<dbReference type="PROSITE" id="PS50835">
    <property type="entry name" value="IG_LIKE"/>
    <property type="match status" value="1"/>
</dbReference>
<dbReference type="PROSITE" id="PS00290">
    <property type="entry name" value="IG_MHC"/>
    <property type="match status" value="1"/>
</dbReference>
<protein>
    <recommendedName>
        <fullName>Ig lambda chain C region</fullName>
    </recommendedName>
</protein>